<keyword id="KW-0488">Methylation</keyword>
<keyword id="KW-0687">Ribonucleoprotein</keyword>
<keyword id="KW-0689">Ribosomal protein</keyword>
<keyword id="KW-0694">RNA-binding</keyword>
<keyword id="KW-0699">rRNA-binding</keyword>
<keyword id="KW-0820">tRNA-binding</keyword>
<reference key="1">
    <citation type="journal article" date="1999" name="Nat. Genet.">
        <title>Comparative genomes of Chlamydia pneumoniae and C. trachomatis.</title>
        <authorList>
            <person name="Kalman S."/>
            <person name="Mitchell W.P."/>
            <person name="Marathe R."/>
            <person name="Lammel C.J."/>
            <person name="Fan J."/>
            <person name="Hyman R.W."/>
            <person name="Olinger L."/>
            <person name="Grimwood J."/>
            <person name="Davis R.W."/>
            <person name="Stephens R.S."/>
        </authorList>
    </citation>
    <scope>NUCLEOTIDE SEQUENCE [LARGE SCALE GENOMIC DNA]</scope>
    <source>
        <strain>CWL029</strain>
    </source>
</reference>
<reference key="2">
    <citation type="journal article" date="2000" name="Nucleic Acids Res.">
        <title>Genome sequences of Chlamydia trachomatis MoPn and Chlamydia pneumoniae AR39.</title>
        <authorList>
            <person name="Read T.D."/>
            <person name="Brunham R.C."/>
            <person name="Shen C."/>
            <person name="Gill S.R."/>
            <person name="Heidelberg J.F."/>
            <person name="White O."/>
            <person name="Hickey E.K."/>
            <person name="Peterson J.D."/>
            <person name="Utterback T.R."/>
            <person name="Berry K.J."/>
            <person name="Bass S."/>
            <person name="Linher K.D."/>
            <person name="Weidman J.F."/>
            <person name="Khouri H.M."/>
            <person name="Craven B."/>
            <person name="Bowman C."/>
            <person name="Dodson R.J."/>
            <person name="Gwinn M.L."/>
            <person name="Nelson W.C."/>
            <person name="DeBoy R.T."/>
            <person name="Kolonay J.F."/>
            <person name="McClarty G."/>
            <person name="Salzberg S.L."/>
            <person name="Eisen J.A."/>
            <person name="Fraser C.M."/>
        </authorList>
    </citation>
    <scope>NUCLEOTIDE SEQUENCE [LARGE SCALE GENOMIC DNA]</scope>
    <source>
        <strain>AR39</strain>
    </source>
</reference>
<reference key="3">
    <citation type="journal article" date="2000" name="Nucleic Acids Res.">
        <title>Comparison of whole genome sequences of Chlamydia pneumoniae J138 from Japan and CWL029 from USA.</title>
        <authorList>
            <person name="Shirai M."/>
            <person name="Hirakawa H."/>
            <person name="Kimoto M."/>
            <person name="Tabuchi M."/>
            <person name="Kishi F."/>
            <person name="Ouchi K."/>
            <person name="Shiba T."/>
            <person name="Ishii K."/>
            <person name="Hattori M."/>
            <person name="Kuhara S."/>
            <person name="Nakazawa T."/>
        </authorList>
    </citation>
    <scope>NUCLEOTIDE SEQUENCE [LARGE SCALE GENOMIC DNA]</scope>
    <source>
        <strain>J138</strain>
    </source>
</reference>
<reference key="4">
    <citation type="submission" date="2002-05" db="EMBL/GenBank/DDBJ databases">
        <title>The genome sequence of Chlamydia pneumoniae TW183 and comparison with other Chlamydia strains based on whole genome sequence analysis.</title>
        <authorList>
            <person name="Geng M.M."/>
            <person name="Schuhmacher A."/>
            <person name="Muehldorfer I."/>
            <person name="Bensch K.W."/>
            <person name="Schaefer K.P."/>
            <person name="Schneider S."/>
            <person name="Pohl T."/>
            <person name="Essig A."/>
            <person name="Marre R."/>
            <person name="Melchers K."/>
        </authorList>
    </citation>
    <scope>NUCLEOTIDE SEQUENCE [LARGE SCALE GENOMIC DNA]</scope>
    <source>
        <strain>TW-183</strain>
    </source>
</reference>
<organism>
    <name type="scientific">Chlamydia pneumoniae</name>
    <name type="common">Chlamydophila pneumoniae</name>
    <dbReference type="NCBI Taxonomy" id="83558"/>
    <lineage>
        <taxon>Bacteria</taxon>
        <taxon>Pseudomonadati</taxon>
        <taxon>Chlamydiota</taxon>
        <taxon>Chlamydiia</taxon>
        <taxon>Chlamydiales</taxon>
        <taxon>Chlamydiaceae</taxon>
        <taxon>Chlamydia/Chlamydophila group</taxon>
        <taxon>Chlamydia</taxon>
    </lineage>
</organism>
<accession>Q9Z800</accession>
<accession>Q9JQ26</accession>
<sequence>MPTINQLIRKRRKSSLARKKSPALQKCPQKRGVCLQVKTKTPKKPNSALRKVAWVRLSNGQEVIAYIGGEGHNLQEHSIVLIQGGRVKDLPGVRYHIVRGTLDCAAVKNRKQSRSRYGAKRPK</sequence>
<feature type="chain" id="PRO_0000146204" description="Small ribosomal subunit protein uS12">
    <location>
        <begin position="1"/>
        <end position="123"/>
    </location>
</feature>
<feature type="region of interest" description="Disordered" evidence="3">
    <location>
        <begin position="1"/>
        <end position="25"/>
    </location>
</feature>
<feature type="compositionally biased region" description="Basic residues" evidence="3">
    <location>
        <begin position="8"/>
        <end position="21"/>
    </location>
</feature>
<feature type="modified residue" description="3-methylthioaspartic acid" evidence="1">
    <location>
        <position position="89"/>
    </location>
</feature>
<gene>
    <name evidence="2" type="primary">rpsL</name>
    <name type="synonym">rs12</name>
    <name type="ordered locus">CPn_0552</name>
    <name type="ordered locus">CP_0200</name>
    <name type="ordered locus">CpB0573</name>
</gene>
<comment type="function">
    <text evidence="2">With S4 and S5 plays an important role in translational accuracy.</text>
</comment>
<comment type="function">
    <text evidence="2">Interacts with and stabilizes bases of the 16S rRNA that are involved in tRNA selection in the A site and with the mRNA backbone. Located at the interface of the 30S and 50S subunits, it traverses the body of the 30S subunit contacting proteins on the other side and probably holding the rRNA structure together. The combined cluster of proteins S8, S12 and S17 appears to hold together the shoulder and platform of the 30S subunit.</text>
</comment>
<comment type="subunit">
    <text evidence="2">Part of the 30S ribosomal subunit. Contacts proteins S8 and S17. May interact with IF1 in the 30S initiation complex.</text>
</comment>
<comment type="similarity">
    <text evidence="2">Belongs to the universal ribosomal protein uS12 family.</text>
</comment>
<protein>
    <recommendedName>
        <fullName evidence="2">Small ribosomal subunit protein uS12</fullName>
    </recommendedName>
    <alternativeName>
        <fullName evidence="4">30S ribosomal protein S12</fullName>
    </alternativeName>
</protein>
<proteinExistence type="inferred from homology"/>
<dbReference type="EMBL" id="AE001363">
    <property type="protein sequence ID" value="AAD18692.1"/>
    <property type="molecule type" value="Genomic_DNA"/>
</dbReference>
<dbReference type="EMBL" id="AE002161">
    <property type="protein sequence ID" value="AAF73639.1"/>
    <property type="molecule type" value="Genomic_DNA"/>
</dbReference>
<dbReference type="EMBL" id="BA000008">
    <property type="protein sequence ID" value="BAA98758.1"/>
    <property type="molecule type" value="Genomic_DNA"/>
</dbReference>
<dbReference type="EMBL" id="AE009440">
    <property type="protein sequence ID" value="AAP98502.1"/>
    <property type="molecule type" value="Genomic_DNA"/>
</dbReference>
<dbReference type="PIR" id="A72066">
    <property type="entry name" value="A72066"/>
</dbReference>
<dbReference type="PIR" id="D86559">
    <property type="entry name" value="D86559"/>
</dbReference>
<dbReference type="RefSeq" id="NP_224748.1">
    <property type="nucleotide sequence ID" value="NC_000922.1"/>
</dbReference>
<dbReference type="RefSeq" id="WP_010883190.1">
    <property type="nucleotide sequence ID" value="NZ_LN847257.1"/>
</dbReference>
<dbReference type="SMR" id="Q9Z800"/>
<dbReference type="STRING" id="406984.CPK_ORF01066"/>
<dbReference type="GeneID" id="45050596"/>
<dbReference type="KEGG" id="cpa:CP_0200"/>
<dbReference type="KEGG" id="cpj:rs12"/>
<dbReference type="KEGG" id="cpn:CPn_0552"/>
<dbReference type="KEGG" id="cpt:CpB0573"/>
<dbReference type="PATRIC" id="fig|115713.3.peg.612"/>
<dbReference type="eggNOG" id="COG0048">
    <property type="taxonomic scope" value="Bacteria"/>
</dbReference>
<dbReference type="HOGENOM" id="CLU_104295_1_2_0"/>
<dbReference type="OMA" id="VCIRVYT"/>
<dbReference type="OrthoDB" id="9802366at2"/>
<dbReference type="Proteomes" id="UP000000583">
    <property type="component" value="Chromosome"/>
</dbReference>
<dbReference type="Proteomes" id="UP000000801">
    <property type="component" value="Chromosome"/>
</dbReference>
<dbReference type="GO" id="GO:0015935">
    <property type="term" value="C:small ribosomal subunit"/>
    <property type="evidence" value="ECO:0007669"/>
    <property type="project" value="InterPro"/>
</dbReference>
<dbReference type="GO" id="GO:0019843">
    <property type="term" value="F:rRNA binding"/>
    <property type="evidence" value="ECO:0007669"/>
    <property type="project" value="UniProtKB-UniRule"/>
</dbReference>
<dbReference type="GO" id="GO:0003735">
    <property type="term" value="F:structural constituent of ribosome"/>
    <property type="evidence" value="ECO:0007669"/>
    <property type="project" value="InterPro"/>
</dbReference>
<dbReference type="GO" id="GO:0000049">
    <property type="term" value="F:tRNA binding"/>
    <property type="evidence" value="ECO:0007669"/>
    <property type="project" value="UniProtKB-UniRule"/>
</dbReference>
<dbReference type="GO" id="GO:0006412">
    <property type="term" value="P:translation"/>
    <property type="evidence" value="ECO:0007669"/>
    <property type="project" value="UniProtKB-UniRule"/>
</dbReference>
<dbReference type="CDD" id="cd03368">
    <property type="entry name" value="Ribosomal_S12"/>
    <property type="match status" value="1"/>
</dbReference>
<dbReference type="FunFam" id="2.40.50.140:FF:000001">
    <property type="entry name" value="30S ribosomal protein S12"/>
    <property type="match status" value="1"/>
</dbReference>
<dbReference type="Gene3D" id="2.40.50.140">
    <property type="entry name" value="Nucleic acid-binding proteins"/>
    <property type="match status" value="1"/>
</dbReference>
<dbReference type="HAMAP" id="MF_00403_B">
    <property type="entry name" value="Ribosomal_uS12_B"/>
    <property type="match status" value="1"/>
</dbReference>
<dbReference type="InterPro" id="IPR012340">
    <property type="entry name" value="NA-bd_OB-fold"/>
</dbReference>
<dbReference type="InterPro" id="IPR006032">
    <property type="entry name" value="Ribosomal_uS12"/>
</dbReference>
<dbReference type="InterPro" id="IPR005679">
    <property type="entry name" value="Ribosomal_uS12_bac"/>
</dbReference>
<dbReference type="NCBIfam" id="TIGR00981">
    <property type="entry name" value="rpsL_bact"/>
    <property type="match status" value="1"/>
</dbReference>
<dbReference type="PANTHER" id="PTHR11652">
    <property type="entry name" value="30S RIBOSOMAL PROTEIN S12 FAMILY MEMBER"/>
    <property type="match status" value="1"/>
</dbReference>
<dbReference type="Pfam" id="PF00164">
    <property type="entry name" value="Ribosom_S12_S23"/>
    <property type="match status" value="1"/>
</dbReference>
<dbReference type="PIRSF" id="PIRSF002133">
    <property type="entry name" value="Ribosomal_S12/S23"/>
    <property type="match status" value="1"/>
</dbReference>
<dbReference type="PRINTS" id="PR01034">
    <property type="entry name" value="RIBOSOMALS12"/>
</dbReference>
<dbReference type="SUPFAM" id="SSF50249">
    <property type="entry name" value="Nucleic acid-binding proteins"/>
    <property type="match status" value="1"/>
</dbReference>
<dbReference type="PROSITE" id="PS00055">
    <property type="entry name" value="RIBOSOMAL_S12"/>
    <property type="match status" value="1"/>
</dbReference>
<name>RS12_CHLPN</name>
<evidence type="ECO:0000250" key="1"/>
<evidence type="ECO:0000255" key="2">
    <source>
        <dbReference type="HAMAP-Rule" id="MF_00403"/>
    </source>
</evidence>
<evidence type="ECO:0000256" key="3">
    <source>
        <dbReference type="SAM" id="MobiDB-lite"/>
    </source>
</evidence>
<evidence type="ECO:0000305" key="4"/>